<keyword id="KW-0325">Glycoprotein</keyword>
<keyword id="KW-0328">Glycosyltransferase</keyword>
<keyword id="KW-0333">Golgi apparatus</keyword>
<keyword id="KW-0472">Membrane</keyword>
<keyword id="KW-1185">Reference proteome</keyword>
<keyword id="KW-0735">Signal-anchor</keyword>
<keyword id="KW-0808">Transferase</keyword>
<keyword id="KW-0812">Transmembrane</keyword>
<keyword id="KW-1133">Transmembrane helix</keyword>
<organism>
    <name type="scientific">Oryza sativa subsp. indica</name>
    <name type="common">Rice</name>
    <dbReference type="NCBI Taxonomy" id="39946"/>
    <lineage>
        <taxon>Eukaryota</taxon>
        <taxon>Viridiplantae</taxon>
        <taxon>Streptophyta</taxon>
        <taxon>Embryophyta</taxon>
        <taxon>Tracheophyta</taxon>
        <taxon>Spermatophyta</taxon>
        <taxon>Magnoliopsida</taxon>
        <taxon>Liliopsida</taxon>
        <taxon>Poales</taxon>
        <taxon>Poaceae</taxon>
        <taxon>BOP clade</taxon>
        <taxon>Oryzoideae</taxon>
        <taxon>Oryzeae</taxon>
        <taxon>Oryzinae</taxon>
        <taxon>Oryza</taxon>
        <taxon>Oryza sativa</taxon>
    </lineage>
</organism>
<name>GT2_ORYSI</name>
<protein>
    <recommendedName>
        <fullName evidence="5">Probable glycosyltransferase 2</fullName>
        <ecNumber evidence="5">2.4.-.-</ecNumber>
    </recommendedName>
</protein>
<reference key="1">
    <citation type="journal article" date="2005" name="PLoS Biol.">
        <title>The genomes of Oryza sativa: a history of duplications.</title>
        <authorList>
            <person name="Yu J."/>
            <person name="Wang J."/>
            <person name="Lin W."/>
            <person name="Li S."/>
            <person name="Li H."/>
            <person name="Zhou J."/>
            <person name="Ni P."/>
            <person name="Dong W."/>
            <person name="Hu S."/>
            <person name="Zeng C."/>
            <person name="Zhang J."/>
            <person name="Zhang Y."/>
            <person name="Li R."/>
            <person name="Xu Z."/>
            <person name="Li S."/>
            <person name="Li X."/>
            <person name="Zheng H."/>
            <person name="Cong L."/>
            <person name="Lin L."/>
            <person name="Yin J."/>
            <person name="Geng J."/>
            <person name="Li G."/>
            <person name="Shi J."/>
            <person name="Liu J."/>
            <person name="Lv H."/>
            <person name="Li J."/>
            <person name="Wang J."/>
            <person name="Deng Y."/>
            <person name="Ran L."/>
            <person name="Shi X."/>
            <person name="Wang X."/>
            <person name="Wu Q."/>
            <person name="Li C."/>
            <person name="Ren X."/>
            <person name="Wang J."/>
            <person name="Wang X."/>
            <person name="Li D."/>
            <person name="Liu D."/>
            <person name="Zhang X."/>
            <person name="Ji Z."/>
            <person name="Zhao W."/>
            <person name="Sun Y."/>
            <person name="Zhang Z."/>
            <person name="Bao J."/>
            <person name="Han Y."/>
            <person name="Dong L."/>
            <person name="Ji J."/>
            <person name="Chen P."/>
            <person name="Wu S."/>
            <person name="Liu J."/>
            <person name="Xiao Y."/>
            <person name="Bu D."/>
            <person name="Tan J."/>
            <person name="Yang L."/>
            <person name="Ye C."/>
            <person name="Zhang J."/>
            <person name="Xu J."/>
            <person name="Zhou Y."/>
            <person name="Yu Y."/>
            <person name="Zhang B."/>
            <person name="Zhuang S."/>
            <person name="Wei H."/>
            <person name="Liu B."/>
            <person name="Lei M."/>
            <person name="Yu H."/>
            <person name="Li Y."/>
            <person name="Xu H."/>
            <person name="Wei S."/>
            <person name="He X."/>
            <person name="Fang L."/>
            <person name="Zhang Z."/>
            <person name="Zhang Y."/>
            <person name="Huang X."/>
            <person name="Su Z."/>
            <person name="Tong W."/>
            <person name="Li J."/>
            <person name="Tong Z."/>
            <person name="Li S."/>
            <person name="Ye J."/>
            <person name="Wang L."/>
            <person name="Fang L."/>
            <person name="Lei T."/>
            <person name="Chen C.-S."/>
            <person name="Chen H.-C."/>
            <person name="Xu Z."/>
            <person name="Li H."/>
            <person name="Huang H."/>
            <person name="Zhang F."/>
            <person name="Xu H."/>
            <person name="Li N."/>
            <person name="Zhao C."/>
            <person name="Li S."/>
            <person name="Dong L."/>
            <person name="Huang Y."/>
            <person name="Li L."/>
            <person name="Xi Y."/>
            <person name="Qi Q."/>
            <person name="Li W."/>
            <person name="Zhang B."/>
            <person name="Hu W."/>
            <person name="Zhang Y."/>
            <person name="Tian X."/>
            <person name="Jiao Y."/>
            <person name="Liang X."/>
            <person name="Jin J."/>
            <person name="Gao L."/>
            <person name="Zheng W."/>
            <person name="Hao B."/>
            <person name="Liu S.-M."/>
            <person name="Wang W."/>
            <person name="Yuan L."/>
            <person name="Cao M."/>
            <person name="McDermott J."/>
            <person name="Samudrala R."/>
            <person name="Wang J."/>
            <person name="Wong G.K.-S."/>
            <person name="Yang H."/>
        </authorList>
    </citation>
    <scope>NUCLEOTIDE SEQUENCE [LARGE SCALE GENOMIC DNA]</scope>
    <source>
        <strain>cv. 93-11</strain>
    </source>
</reference>
<sequence length="480" mass="53424">MGQEGMGYNNGKGGGGGGGGLPMTAPRPRGASPLSSHGHHHRSRKIHRTFNNVKITVLCGLVTILVLRGTIGLNLSLPNQPTDADALAGAKAVEDIDRILREIRSDGGADDDAAAAGDLAGSFNATALNATEAAAAYASAVERYALGPKISDWDGQRRRWLRQNPGFPSTVAGGKPRILLVTGSQPGPCDNPLGDHYLLKTTKNKIDYCRLHGIEIVHNLAHLDTELAGYWAKLPLLRRLMLSHPEVEWIWWMDSDALFTDMAFELPLSRYQDRNLIIHGYQDLLFEKHSWIALNTGSFLFRNCQWSLDLLDAWAPMGPKGFIRDEAGKILTANLKGRPAFEADDQSALIYLLLSQKEKWMNKVFIENSYYLHGFWAGLVDKYEEMMENHHPGLGDERWPFVTHFVGCKPCGSYGDYPVERCLRSMERAFNFADNQVLRLYGFAHKGLESPKIKRVRNQTTKPIDDKENLDVKAKISTTS</sequence>
<accession>B8AIZ4</accession>
<proteinExistence type="inferred from homology"/>
<evidence type="ECO:0000250" key="1">
    <source>
        <dbReference type="UniProtKB" id="Q10MQ0"/>
    </source>
</evidence>
<evidence type="ECO:0000255" key="2"/>
<evidence type="ECO:0000255" key="3">
    <source>
        <dbReference type="PROSITE-ProRule" id="PRU00498"/>
    </source>
</evidence>
<evidence type="ECO:0000256" key="4">
    <source>
        <dbReference type="SAM" id="MobiDB-lite"/>
    </source>
</evidence>
<evidence type="ECO:0000305" key="5"/>
<evidence type="ECO:0000312" key="6">
    <source>
        <dbReference type="EMBL" id="EEC73308.1"/>
    </source>
</evidence>
<dbReference type="EC" id="2.4.-.-" evidence="5"/>
<dbReference type="EMBL" id="CM000127">
    <property type="protein sequence ID" value="EEC73308.1"/>
    <property type="molecule type" value="Genomic_DNA"/>
</dbReference>
<dbReference type="SMR" id="B8AIZ4"/>
<dbReference type="STRING" id="39946.B8AIZ4"/>
<dbReference type="GlyCosmos" id="B8AIZ4">
    <property type="glycosylation" value="4 sites, No reported glycans"/>
</dbReference>
<dbReference type="EnsemblPlants" id="BGIOSGA006341-TA">
    <property type="protein sequence ID" value="BGIOSGA006341-PA"/>
    <property type="gene ID" value="BGIOSGA006341"/>
</dbReference>
<dbReference type="EnsemblPlants" id="OsGoSa_02g0019870.01">
    <property type="protein sequence ID" value="OsGoSa_02g0019870.01"/>
    <property type="gene ID" value="OsGoSa_02g0019870"/>
</dbReference>
<dbReference type="EnsemblPlants" id="OsIR64_02g0019190.01">
    <property type="protein sequence ID" value="OsIR64_02g0019190.01"/>
    <property type="gene ID" value="OsIR64_02g0019190"/>
</dbReference>
<dbReference type="EnsemblPlants" id="OsIR64_02g0019190.02">
    <property type="protein sequence ID" value="OsIR64_02g0019190.02"/>
    <property type="gene ID" value="OsIR64_02g0019190"/>
</dbReference>
<dbReference type="EnsemblPlants" id="OsKYG_02g0019460.01">
    <property type="protein sequence ID" value="OsKYG_02g0019460.01"/>
    <property type="gene ID" value="OsKYG_02g0019460"/>
</dbReference>
<dbReference type="EnsemblPlants" id="OsKYG_02g0019460.02">
    <property type="protein sequence ID" value="OsKYG_02g0019460.02"/>
    <property type="gene ID" value="OsKYG_02g0019460"/>
</dbReference>
<dbReference type="EnsemblPlants" id="OsLaMu_02g0019380.01">
    <property type="protein sequence ID" value="OsLaMu_02g0019380.01"/>
    <property type="gene ID" value="OsLaMu_02g0019380"/>
</dbReference>
<dbReference type="EnsemblPlants" id="OsLaMu_02g0019380.02">
    <property type="protein sequence ID" value="OsLaMu_02g0019380.02"/>
    <property type="gene ID" value="OsLaMu_02g0019380"/>
</dbReference>
<dbReference type="EnsemblPlants" id="OsLima_02g0019720.01">
    <property type="protein sequence ID" value="OsLima_02g0019720.01"/>
    <property type="gene ID" value="OsLima_02g0019720"/>
</dbReference>
<dbReference type="EnsemblPlants" id="OsLima_02g0019720.02">
    <property type="protein sequence ID" value="OsLima_02g0019720.02"/>
    <property type="gene ID" value="OsLima_02g0019720"/>
</dbReference>
<dbReference type="EnsemblPlants" id="OsLiXu_02g0019600.01">
    <property type="protein sequence ID" value="OsLiXu_02g0019600.01"/>
    <property type="gene ID" value="OsLiXu_02g0019600"/>
</dbReference>
<dbReference type="EnsemblPlants" id="OsLiXu_02g0019600.02">
    <property type="protein sequence ID" value="OsLiXu_02g0019600.02"/>
    <property type="gene ID" value="OsLiXu_02g0019600"/>
</dbReference>
<dbReference type="EnsemblPlants" id="OsMH63_02G019850_01">
    <property type="protein sequence ID" value="OsMH63_02G019850_01"/>
    <property type="gene ID" value="OsMH63_02G019850"/>
</dbReference>
<dbReference type="EnsemblPlants" id="OsMH63_02G019850_02">
    <property type="protein sequence ID" value="OsMH63_02G019850_02"/>
    <property type="gene ID" value="OsMH63_02G019850"/>
</dbReference>
<dbReference type="EnsemblPlants" id="OsPr106_02g0019480.01">
    <property type="protein sequence ID" value="OsPr106_02g0019480.01"/>
    <property type="gene ID" value="OsPr106_02g0019480"/>
</dbReference>
<dbReference type="EnsemblPlants" id="OsPr106_02g0019480.02">
    <property type="protein sequence ID" value="OsPr106_02g0019480.02"/>
    <property type="gene ID" value="OsPr106_02g0019480"/>
</dbReference>
<dbReference type="EnsemblPlants" id="OsZS97_02G019230_01">
    <property type="protein sequence ID" value="OsZS97_02G019230_01"/>
    <property type="gene ID" value="OsZS97_02G019230"/>
</dbReference>
<dbReference type="EnsemblPlants" id="OsZS97_02G019230_02">
    <property type="protein sequence ID" value="OsZS97_02G019230_02"/>
    <property type="gene ID" value="OsZS97_02G019230"/>
</dbReference>
<dbReference type="Gramene" id="BGIOSGA006341-TA">
    <property type="protein sequence ID" value="BGIOSGA006341-PA"/>
    <property type="gene ID" value="BGIOSGA006341"/>
</dbReference>
<dbReference type="Gramene" id="OsGoSa_02g0019870.01">
    <property type="protein sequence ID" value="OsGoSa_02g0019870.01"/>
    <property type="gene ID" value="OsGoSa_02g0019870"/>
</dbReference>
<dbReference type="Gramene" id="OsIR64_02g0019190.01">
    <property type="protein sequence ID" value="OsIR64_02g0019190.01"/>
    <property type="gene ID" value="OsIR64_02g0019190"/>
</dbReference>
<dbReference type="Gramene" id="OsIR64_02g0019190.02">
    <property type="protein sequence ID" value="OsIR64_02g0019190.02"/>
    <property type="gene ID" value="OsIR64_02g0019190"/>
</dbReference>
<dbReference type="Gramene" id="OsKYG_02g0019460.01">
    <property type="protein sequence ID" value="OsKYG_02g0019460.01"/>
    <property type="gene ID" value="OsKYG_02g0019460"/>
</dbReference>
<dbReference type="Gramene" id="OsKYG_02g0019460.02">
    <property type="protein sequence ID" value="OsKYG_02g0019460.02"/>
    <property type="gene ID" value="OsKYG_02g0019460"/>
</dbReference>
<dbReference type="Gramene" id="OsLaMu_02g0019380.01">
    <property type="protein sequence ID" value="OsLaMu_02g0019380.01"/>
    <property type="gene ID" value="OsLaMu_02g0019380"/>
</dbReference>
<dbReference type="Gramene" id="OsLaMu_02g0019380.02">
    <property type="protein sequence ID" value="OsLaMu_02g0019380.02"/>
    <property type="gene ID" value="OsLaMu_02g0019380"/>
</dbReference>
<dbReference type="Gramene" id="OsLima_02g0019720.01">
    <property type="protein sequence ID" value="OsLima_02g0019720.01"/>
    <property type="gene ID" value="OsLima_02g0019720"/>
</dbReference>
<dbReference type="Gramene" id="OsLima_02g0019720.02">
    <property type="protein sequence ID" value="OsLima_02g0019720.02"/>
    <property type="gene ID" value="OsLima_02g0019720"/>
</dbReference>
<dbReference type="Gramene" id="OsLiXu_02g0019600.01">
    <property type="protein sequence ID" value="OsLiXu_02g0019600.01"/>
    <property type="gene ID" value="OsLiXu_02g0019600"/>
</dbReference>
<dbReference type="Gramene" id="OsLiXu_02g0019600.02">
    <property type="protein sequence ID" value="OsLiXu_02g0019600.02"/>
    <property type="gene ID" value="OsLiXu_02g0019600"/>
</dbReference>
<dbReference type="Gramene" id="OsMH63_02G019850_01">
    <property type="protein sequence ID" value="OsMH63_02G019850_01"/>
    <property type="gene ID" value="OsMH63_02G019850"/>
</dbReference>
<dbReference type="Gramene" id="OsMH63_02G019850_02">
    <property type="protein sequence ID" value="OsMH63_02G019850_02"/>
    <property type="gene ID" value="OsMH63_02G019850"/>
</dbReference>
<dbReference type="Gramene" id="OsPr106_02g0019480.01">
    <property type="protein sequence ID" value="OsPr106_02g0019480.01"/>
    <property type="gene ID" value="OsPr106_02g0019480"/>
</dbReference>
<dbReference type="Gramene" id="OsPr106_02g0019480.02">
    <property type="protein sequence ID" value="OsPr106_02g0019480.02"/>
    <property type="gene ID" value="OsPr106_02g0019480"/>
</dbReference>
<dbReference type="Gramene" id="OsZS97_02G019230_01">
    <property type="protein sequence ID" value="OsZS97_02G019230_01"/>
    <property type="gene ID" value="OsZS97_02G019230"/>
</dbReference>
<dbReference type="Gramene" id="OsZS97_02G019230_02">
    <property type="protein sequence ID" value="OsZS97_02G019230_02"/>
    <property type="gene ID" value="OsZS97_02G019230"/>
</dbReference>
<dbReference type="HOGENOM" id="CLU_034328_1_0_1"/>
<dbReference type="OMA" id="ARYEKHN"/>
<dbReference type="OrthoDB" id="205108at2759"/>
<dbReference type="Proteomes" id="UP000007015">
    <property type="component" value="Chromosome 2"/>
</dbReference>
<dbReference type="GO" id="GO:0005768">
    <property type="term" value="C:endosome"/>
    <property type="evidence" value="ECO:0007669"/>
    <property type="project" value="TreeGrafter"/>
</dbReference>
<dbReference type="GO" id="GO:0000139">
    <property type="term" value="C:Golgi membrane"/>
    <property type="evidence" value="ECO:0007669"/>
    <property type="project" value="UniProtKB-SubCell"/>
</dbReference>
<dbReference type="GO" id="GO:0005802">
    <property type="term" value="C:trans-Golgi network"/>
    <property type="evidence" value="ECO:0007669"/>
    <property type="project" value="TreeGrafter"/>
</dbReference>
<dbReference type="GO" id="GO:0016758">
    <property type="term" value="F:hexosyltransferase activity"/>
    <property type="evidence" value="ECO:0007669"/>
    <property type="project" value="TreeGrafter"/>
</dbReference>
<dbReference type="GO" id="GO:0009969">
    <property type="term" value="P:xyloglucan biosynthetic process"/>
    <property type="evidence" value="ECO:0007669"/>
    <property type="project" value="TreeGrafter"/>
</dbReference>
<dbReference type="FunFam" id="3.90.550.10:FF:000032">
    <property type="entry name" value="xyloglucan 6-xylosyltransferase 2"/>
    <property type="match status" value="1"/>
</dbReference>
<dbReference type="Gene3D" id="3.90.550.10">
    <property type="entry name" value="Spore Coat Polysaccharide Biosynthesis Protein SpsA, Chain A"/>
    <property type="match status" value="1"/>
</dbReference>
<dbReference type="InterPro" id="IPR008630">
    <property type="entry name" value="Glyco_trans_34"/>
</dbReference>
<dbReference type="InterPro" id="IPR029044">
    <property type="entry name" value="Nucleotide-diphossugar_trans"/>
</dbReference>
<dbReference type="PANTHER" id="PTHR31311:SF44">
    <property type="entry name" value="GLYCOSYLTRANSFERASE 2-RELATED"/>
    <property type="match status" value="1"/>
</dbReference>
<dbReference type="PANTHER" id="PTHR31311">
    <property type="entry name" value="XYLOGLUCAN 6-XYLOSYLTRANSFERASE 5-RELATED-RELATED"/>
    <property type="match status" value="1"/>
</dbReference>
<dbReference type="Pfam" id="PF05637">
    <property type="entry name" value="Glyco_transf_34"/>
    <property type="match status" value="1"/>
</dbReference>
<feature type="chain" id="PRO_0000434326" description="Probable glycosyltransferase 2">
    <location>
        <begin position="1"/>
        <end position="480"/>
    </location>
</feature>
<feature type="topological domain" description="Cytoplasmic" evidence="5">
    <location>
        <begin position="1"/>
        <end position="49"/>
    </location>
</feature>
<feature type="transmembrane region" description="Helical; Signal-anchor for type II membrane protein" evidence="2">
    <location>
        <begin position="50"/>
        <end position="72"/>
    </location>
</feature>
<feature type="topological domain" description="Lumenal" evidence="5">
    <location>
        <begin position="73"/>
        <end position="480"/>
    </location>
</feature>
<feature type="region of interest" description="Disordered" evidence="4">
    <location>
        <begin position="1"/>
        <end position="45"/>
    </location>
</feature>
<feature type="compositionally biased region" description="Gly residues" evidence="4">
    <location>
        <begin position="1"/>
        <end position="21"/>
    </location>
</feature>
<feature type="glycosylation site" description="N-linked (GlcNAc...) asparagine" evidence="3">
    <location>
        <position position="74"/>
    </location>
</feature>
<feature type="glycosylation site" description="N-linked (GlcNAc...) asparagine" evidence="3">
    <location>
        <position position="124"/>
    </location>
</feature>
<feature type="glycosylation site" description="N-linked (GlcNAc...) asparagine" evidence="3">
    <location>
        <position position="129"/>
    </location>
</feature>
<feature type="glycosylation site" description="N-linked (GlcNAc...) asparagine" evidence="3">
    <location>
        <position position="458"/>
    </location>
</feature>
<gene>
    <name evidence="5" type="primary">GT2</name>
    <name evidence="6" type="ORF">OsI_07488</name>
</gene>
<comment type="function">
    <text evidence="1">Probable glycosyltransferase that may be involved in the biosynthesis of xyloglucan.</text>
</comment>
<comment type="subcellular location">
    <subcellularLocation>
        <location evidence="5">Golgi apparatus membrane</location>
        <topology evidence="5">Single-pass type II membrane protein</topology>
    </subcellularLocation>
</comment>
<comment type="similarity">
    <text evidence="5">Belongs to the glycosyltransferase 34 family.</text>
</comment>